<sequence>MANKTKKPIYPFEDWVIRETQFSIDTNYRNETIFTLANGYIGMRGTFEERYSGPKNTSFNGTYINGFYEIHDIVYPEGGYGFAKIGQTMLNVADSKIIKLYVDGEEFDLLQGKILFYERVLDMKKGFVERKVKWESPTGKILEVKIKRIVSLNRQHLAAISFTMQPVNFTGKIRFVSAIDGNVSNINDSEDVRVGSNLKGKVLKTIDKSVEGLKGWIVQKTQKSNFSYACAIDNVLVADSKYEVSNSLEEDGVKVIVDLEAEKGTSYTLNKFISYYTSKDFDENKLVALALEEIEKAKNDGFETIEKEQEEFLNSFWKDADVIIEGDKALQQGIRFNEFHLLQSVGRDGKTNIAAKGLTGGGYEGHYFWDSDIYIMPFFLYTKPEIAKALVMYRYNLLDAARSRAKELGHKGALYPWRTIDGPECSAYFPAGTAQYHINADIVYALKRYVEATNDVDFLYDYGCEILFETARFWEDLGAYIPLKGNKFCINCVTGPDEYTALVDNNAYTNYMAKMNLEYAYDIANKMKKEVPQKYQKVASKLNLKDEEIVAWKKAADNMYLPYSKELDIIPQDDSFLYKERITVDEIPEDQFPLLLHWHYLNIYRYQICKQPDVLLLMFLQREKFTKDELKKNYDYYEPITTHDSSLSPAIFSILANEIGYTDKAYKYFMMTARMDLDDYNDNVKDGIHAASMAGTWSAVVNGFGGMRVYTNELHFEPRLPKEWNLLSFNVRYKGRKINVKLTKENVVFALLEGEPIEIYYFDKKILLEKGEIK</sequence>
<proteinExistence type="evidence at protein level"/>
<name>TREP_THEBR</name>
<reference key="1">
    <citation type="journal article" date="2002" name="Biosci. Biotechnol. Biochem.">
        <title>Gene encoding a trehalose phosphorylase from Thermoanaerobacter brockii ATCC 35047.</title>
        <authorList>
            <person name="Maruta K."/>
            <person name="Mukai K."/>
            <person name="Yamashita H."/>
            <person name="Kubota M."/>
            <person name="Chaen H."/>
            <person name="Fukuda S."/>
            <person name="Kurimoto M."/>
        </authorList>
    </citation>
    <scope>NUCLEOTIDE SEQUENCE [GENOMIC DNA]</scope>
    <scope>GENE NAME</scope>
    <source>
        <strain>ATCC 35047 / HTRI</strain>
    </source>
</reference>
<reference key="2">
    <citation type="journal article" date="1999" name="J. Appl. Glycosci.">
        <title>Purification and characterization of thermostable trehalose phosphorylase from Thermoanaerobium brockii.</title>
        <authorList>
            <person name="Chaen H."/>
            <person name="Nakada T."/>
            <person name="Nishimoto T."/>
            <person name="Kuroda N."/>
            <person name="Fukuda S."/>
            <person name="Sugimoto T."/>
            <person name="Kurimoto M."/>
            <person name="Tsujisaka Y."/>
        </authorList>
    </citation>
    <scope>PROTEIN SEQUENCE OF 2-16</scope>
    <scope>FUNCTION</scope>
    <scope>CATALYTIC ACTIVITY</scope>
    <scope>ACTIVITY REGULATION</scope>
    <scope>BIOPHYSICOCHEMICAL PROPERTIES</scope>
    <scope>SUBUNIT</scope>
    <source>
        <strain>ATCC 35047 / HTRI</strain>
    </source>
</reference>
<feature type="initiator methionine" description="Removed" evidence="2">
    <location>
        <position position="1"/>
    </location>
</feature>
<feature type="chain" id="PRO_0000418978" description="Alpha,alpha-trehalose phosphorylase">
    <location>
        <begin position="2"/>
        <end position="774"/>
    </location>
</feature>
<feature type="active site" description="Proton donor" evidence="1">
    <location>
        <position position="498"/>
    </location>
</feature>
<feature type="binding site" evidence="1">
    <location>
        <begin position="369"/>
        <end position="370"/>
    </location>
    <ligand>
        <name>substrate</name>
    </ligand>
</feature>
<feature type="binding site" evidence="1">
    <location>
        <begin position="610"/>
        <end position="611"/>
    </location>
    <ligand>
        <name>substrate</name>
    </ligand>
</feature>
<gene>
    <name type="primary">treP</name>
</gene>
<organism>
    <name type="scientific">Thermoanaerobacter brockii</name>
    <name type="common">Thermoanaerobium brockii</name>
    <dbReference type="NCBI Taxonomy" id="29323"/>
    <lineage>
        <taxon>Bacteria</taxon>
        <taxon>Bacillati</taxon>
        <taxon>Bacillota</taxon>
        <taxon>Clostridia</taxon>
        <taxon>Thermoanaerobacterales</taxon>
        <taxon>Thermoanaerobacteraceae</taxon>
        <taxon>Thermoanaerobacter</taxon>
    </lineage>
</organism>
<accession>Q8L164</accession>
<comment type="function">
    <text evidence="2">Catalyzes the reversible phosphorolytic cleavage of trehalose. Phosphorolysis is specific for trehalose, but D-xylose, D-galactose, L-arabinose, D-fucose, L-fucose, D-glucosamine and 2-deoxy D-glucose can act as substitutes for D-glucose in the synthetic reaction.</text>
</comment>
<comment type="catalytic activity">
    <reaction evidence="2">
        <text>alpha,alpha-trehalose + phosphate = beta-D-glucose 1-phosphate + D-glucose</text>
        <dbReference type="Rhea" id="RHEA:23512"/>
        <dbReference type="ChEBI" id="CHEBI:4167"/>
        <dbReference type="ChEBI" id="CHEBI:16551"/>
        <dbReference type="ChEBI" id="CHEBI:43474"/>
        <dbReference type="ChEBI" id="CHEBI:57684"/>
        <dbReference type="EC" id="2.4.1.64"/>
    </reaction>
</comment>
<comment type="activity regulation">
    <text evidence="2">Inhibited by Cu(2+), Hg(2+), Mg(2+), Mn(2+), Pb(2+) and Zn(2+).</text>
</comment>
<comment type="biophysicochemical properties">
    <kinetics>
        <KM evidence="2">0.94 mM for trehalose</KM>
        <KM evidence="2">0.57 mM for phosphate</KM>
        <KM evidence="2">2.4 mM for D-glucose</KM>
        <KM evidence="2">0.75 mM for beta-D-glucose 1-phosphate</KM>
        <text>kcat is 110 sec(-1) for trehalose. kcat is 110 sec(-1) for phosphate. kcat is 140 sec(-1) for D-glucose. kcat is 140 sec(-1) for beta-D-glucose 1-phosphate.</text>
    </kinetics>
    <phDependence>
        <text evidence="2">Optimum pH is 7.0-7.5 for phosphorolysis, and 6.0-7.0 for synthetic reaction.</text>
    </phDependence>
    <temperatureDependence>
        <text evidence="2">Optimum temperature is 70 degrees Celsius.</text>
    </temperatureDependence>
</comment>
<comment type="pathway">
    <text>Glycan degradation; trehalose degradation.</text>
</comment>
<comment type="subunit">
    <text evidence="2">Homodimer.</text>
</comment>
<comment type="similarity">
    <text evidence="3">Belongs to the glycosyl hydrolase 65 family.</text>
</comment>
<protein>
    <recommendedName>
        <fullName>Alpha,alpha-trehalose phosphorylase</fullName>
        <shortName>TPase</shortName>
        <ecNumber>2.4.1.64</ecNumber>
    </recommendedName>
</protein>
<dbReference type="EC" id="2.4.1.64"/>
<dbReference type="EMBL" id="AB073930">
    <property type="protein sequence ID" value="BAB97299.1"/>
    <property type="molecule type" value="Genomic_DNA"/>
</dbReference>
<dbReference type="PIR" id="JC7887">
    <property type="entry name" value="JC7887"/>
</dbReference>
<dbReference type="SMR" id="Q8L164"/>
<dbReference type="CAZy" id="GH65">
    <property type="family name" value="Glycoside Hydrolase Family 65"/>
</dbReference>
<dbReference type="BRENDA" id="2.4.1.64">
    <property type="organism ID" value="1463"/>
</dbReference>
<dbReference type="UniPathway" id="UPA00300"/>
<dbReference type="GO" id="GO:0047656">
    <property type="term" value="F:alpha,alpha-trehalose phosphorylase activity"/>
    <property type="evidence" value="ECO:0000314"/>
    <property type="project" value="UniProtKB"/>
</dbReference>
<dbReference type="GO" id="GO:0030246">
    <property type="term" value="F:carbohydrate binding"/>
    <property type="evidence" value="ECO:0007669"/>
    <property type="project" value="InterPro"/>
</dbReference>
<dbReference type="GO" id="GO:0004553">
    <property type="term" value="F:hydrolase activity, hydrolyzing O-glycosyl compounds"/>
    <property type="evidence" value="ECO:0007669"/>
    <property type="project" value="TreeGrafter"/>
</dbReference>
<dbReference type="GO" id="GO:0005993">
    <property type="term" value="P:trehalose catabolic process"/>
    <property type="evidence" value="ECO:0000314"/>
    <property type="project" value="UniProtKB"/>
</dbReference>
<dbReference type="FunFam" id="1.50.10.10:FF:000029">
    <property type="entry name" value="Family 65 glycosyl hydrolase"/>
    <property type="match status" value="1"/>
</dbReference>
<dbReference type="FunFam" id="2.60.420.10:FF:000001">
    <property type="entry name" value="Family 65 glycosyl hydrolase"/>
    <property type="match status" value="1"/>
</dbReference>
<dbReference type="Gene3D" id="1.50.10.10">
    <property type="match status" value="1"/>
</dbReference>
<dbReference type="Gene3D" id="2.70.98.40">
    <property type="entry name" value="Glycoside hydrolase, family 65, N-terminal domain"/>
    <property type="match status" value="1"/>
</dbReference>
<dbReference type="Gene3D" id="2.60.420.10">
    <property type="entry name" value="Maltose phosphorylase, domain 3"/>
    <property type="match status" value="1"/>
</dbReference>
<dbReference type="InterPro" id="IPR008928">
    <property type="entry name" value="6-hairpin_glycosidase_sf"/>
</dbReference>
<dbReference type="InterPro" id="IPR012341">
    <property type="entry name" value="6hp_glycosidase-like_sf"/>
</dbReference>
<dbReference type="InterPro" id="IPR011013">
    <property type="entry name" value="Gal_mutarotase_sf_dom"/>
</dbReference>
<dbReference type="InterPro" id="IPR005194">
    <property type="entry name" value="Glyco_hydro_65_C"/>
</dbReference>
<dbReference type="InterPro" id="IPR005195">
    <property type="entry name" value="Glyco_hydro_65_M"/>
</dbReference>
<dbReference type="InterPro" id="IPR005196">
    <property type="entry name" value="Glyco_hydro_65_N"/>
</dbReference>
<dbReference type="InterPro" id="IPR037018">
    <property type="entry name" value="Glyco_hydro_65_N_sf"/>
</dbReference>
<dbReference type="InterPro" id="IPR017045">
    <property type="entry name" value="Malt_Pase/Glycosyl_Hdrlase"/>
</dbReference>
<dbReference type="PANTHER" id="PTHR11051">
    <property type="entry name" value="GLYCOSYL HYDROLASE-RELATED"/>
    <property type="match status" value="1"/>
</dbReference>
<dbReference type="PANTHER" id="PTHR11051:SF8">
    <property type="entry name" value="PROTEIN-GLUCOSYLGALACTOSYLHYDROXYLYSINE GLUCOSIDASE"/>
    <property type="match status" value="1"/>
</dbReference>
<dbReference type="Pfam" id="PF03633">
    <property type="entry name" value="Glyco_hydro_65C"/>
    <property type="match status" value="1"/>
</dbReference>
<dbReference type="Pfam" id="PF03632">
    <property type="entry name" value="Glyco_hydro_65m"/>
    <property type="match status" value="1"/>
</dbReference>
<dbReference type="Pfam" id="PF03636">
    <property type="entry name" value="Glyco_hydro_65N"/>
    <property type="match status" value="1"/>
</dbReference>
<dbReference type="PIRSF" id="PIRSF036289">
    <property type="entry name" value="Glycosyl_hydrolase_malt_phosph"/>
    <property type="match status" value="1"/>
</dbReference>
<dbReference type="SUPFAM" id="SSF74650">
    <property type="entry name" value="Galactose mutarotase-like"/>
    <property type="match status" value="1"/>
</dbReference>
<dbReference type="SUPFAM" id="SSF48208">
    <property type="entry name" value="Six-hairpin glycosidases"/>
    <property type="match status" value="1"/>
</dbReference>
<keyword id="KW-0903">Direct protein sequencing</keyword>
<keyword id="KW-0328">Glycosyltransferase</keyword>
<keyword id="KW-0808">Transferase</keyword>
<evidence type="ECO:0000250" key="1">
    <source>
        <dbReference type="UniProtKB" id="D6XZ22"/>
    </source>
</evidence>
<evidence type="ECO:0000269" key="2">
    <source ref="2"/>
</evidence>
<evidence type="ECO:0000305" key="3"/>